<organism>
    <name type="scientific">Streptomyces griseus</name>
    <dbReference type="NCBI Taxonomy" id="1911"/>
    <lineage>
        <taxon>Bacteria</taxon>
        <taxon>Bacillati</taxon>
        <taxon>Actinomycetota</taxon>
        <taxon>Actinomycetes</taxon>
        <taxon>Kitasatosporales</taxon>
        <taxon>Streptomycetaceae</taxon>
        <taxon>Streptomyces</taxon>
    </lineage>
</organism>
<feature type="chain" id="PRO_0000072285" description="dTDP-dihydrostreptose--streptidine-6-phosphate dihydrostreptosyltransferase">
    <location>
        <begin position="1"/>
        <end position="384"/>
    </location>
</feature>
<gene>
    <name type="primary">strH</name>
</gene>
<reference key="1">
    <citation type="journal article" date="1991" name="Mol. Gen. Genet.">
        <title>Genetics of streptomycin production in Streptomyces griseus: nucleotide sequence of five genes, strFGHIK, including a phosphatase gene.</title>
        <authorList>
            <person name="Mansouri K."/>
            <person name="Piepersberg W."/>
        </authorList>
    </citation>
    <scope>NUCLEOTIDE SEQUENCE [GENOMIC DNA]</scope>
    <source>
        <strain>N2-3-11</strain>
    </source>
</reference>
<dbReference type="EC" id="2.4.2.27"/>
<dbReference type="EMBL" id="Y00459">
    <property type="protein sequence ID" value="CAA68520.1"/>
    <property type="molecule type" value="Genomic_DNA"/>
</dbReference>
<dbReference type="PIR" id="S17778">
    <property type="entry name" value="S17778"/>
</dbReference>
<dbReference type="RefSeq" id="WP_012381621.1">
    <property type="nucleotide sequence ID" value="NZ_UAVD01000010.1"/>
</dbReference>
<dbReference type="OMA" id="GSHEIFE"/>
<dbReference type="OrthoDB" id="4003627at2"/>
<dbReference type="UniPathway" id="UPA00066"/>
<dbReference type="GO" id="GO:0047282">
    <property type="term" value="F:dTDP-dihydrostreptose-streptidine-6-phosphate dihydrostreptosyltransferase activity"/>
    <property type="evidence" value="ECO:0007669"/>
    <property type="project" value="UniProtKB-EC"/>
</dbReference>
<dbReference type="GO" id="GO:0019872">
    <property type="term" value="P:streptomycin biosynthetic process"/>
    <property type="evidence" value="ECO:0007669"/>
    <property type="project" value="UniProtKB-UniPathway"/>
</dbReference>
<protein>
    <recommendedName>
        <fullName>dTDP-dihydrostreptose--streptidine-6-phosphate dihydrostreptosyltransferase</fullName>
        <ecNumber>2.4.2.27</ecNumber>
    </recommendedName>
</protein>
<sequence>MVMTSPTRKPSGDVRPDEPLHHLDQPFREFLDGLPADRPPWFCFFSSGLLHVLHHFLRFTPERLNCVFICSGLSKEEAELRDRMSGGRPVFDMTEQVGSHEIFELLVRNLDRPFGIVDVDCFVTETDWFERCMDGLEPGVAVSGPLSYGPIPLAAPPFLALDPRVRPDIERAIGGTVTPAAYSYTAPGPEKEIDGAMVRLIEPHHERALARVVALEGPRLPFPQGGLVDVLDDGREVRSHERYHHLQNGNEVIRVVFDGLMFYQLMALAAGLRIAHFHSFPGTKVFAPQLVHAGGISYWHRLRPSEIAAGINELPWAAHVDALLLEEFNRRADVPASYRTRGTRLAANLRRSMVDMAGLRDELRAKLDSSGVDVTDPRWAVVLG</sequence>
<evidence type="ECO:0000250" key="1"/>
<comment type="function">
    <text evidence="1">Is probably a dihydrostreptosyl glycosyltransferase, involved in the first glycosylation step condensing streptidine-6-phosphate and dihydrostreptose.</text>
</comment>
<comment type="catalytic activity">
    <reaction>
        <text>dTDP-L-dihydrostreptose + streptidine 6-phosphate = O-(1-&gt;4)-alpha-L-dihydrostreptosyl-streptidine 6-phosphate + dTDP + H(+)</text>
        <dbReference type="Rhea" id="RHEA:24392"/>
        <dbReference type="ChEBI" id="CHEBI:15378"/>
        <dbReference type="ChEBI" id="CHEBI:57631"/>
        <dbReference type="ChEBI" id="CHEBI:58082"/>
        <dbReference type="ChEBI" id="CHEBI:58369"/>
        <dbReference type="ChEBI" id="CHEBI:60106"/>
        <dbReference type="EC" id="2.4.2.27"/>
    </reaction>
</comment>
<comment type="pathway">
    <text>Antibiotic biosynthesis; streptomycin biosynthesis.</text>
</comment>
<accession>P09399</accession>
<proteinExistence type="inferred from homology"/>
<name>STRH_STRGR</name>
<keyword id="KW-0045">Antibiotic biosynthesis</keyword>
<keyword id="KW-0328">Glycosyltransferase</keyword>
<keyword id="KW-0759">Streptomycin biosynthesis</keyword>
<keyword id="KW-0808">Transferase</keyword>